<comment type="function">
    <text evidence="4">Involved in transport of phospholipids. Contributes to transmembrane flipping of lipids. Requires an interaction with a protein of the ALIS family for activity. Specific for phosphatidylserine and has no activity with lysolipid, phosphatidylcholine or phosphatidylethanolamine.</text>
</comment>
<comment type="catalytic activity">
    <reaction evidence="7">
        <text>ATP + H2O + phospholipidSide 1 = ADP + phosphate + phospholipidSide 2.</text>
        <dbReference type="EC" id="7.6.2.1"/>
    </reaction>
</comment>
<comment type="subunit">
    <text evidence="4">Interacts with ALIS1, ALIS3 and ALIS5 in a heterologous system.</text>
</comment>
<comment type="subcellular location">
    <subcellularLocation>
        <location evidence="4">Endoplasmic reticulum membrane</location>
        <topology evidence="4">Multi-pass membrane protein</topology>
    </subcellularLocation>
    <subcellularLocation>
        <location evidence="4">Prevacuolar compartment membrane</location>
        <topology evidence="4">Multi-pass membrane protein</topology>
    </subcellularLocation>
    <text evidence="4">Requires the presence of an ALIS protein to exit the endoplasmic reticulum to the prevacuolar compartment.</text>
</comment>
<comment type="alternative products">
    <event type="alternative splicing"/>
    <isoform>
        <id>P98205-1</id>
        <name>1</name>
        <sequence type="displayed"/>
    </isoform>
    <text evidence="6">A number of isoforms are produced. According to EST sequences.</text>
</comment>
<comment type="miscellaneous">
    <text evidence="4">The intracellular targeting signals and lipid specificity determinants reside in the catalytic ALA subunit.</text>
</comment>
<comment type="similarity">
    <text evidence="6">Belongs to the cation transport ATPase (P-type) (TC 3.A.3) family. Type IV subfamily.</text>
</comment>
<comment type="sequence caution" evidence="6">
    <conflict type="erroneous initiation">
        <sequence resource="EMBL-CDS" id="AAL31943"/>
    </conflict>
    <text>Truncated N-terminus.</text>
</comment>
<comment type="sequence caution" evidence="6">
    <conflict type="erroneous gene model prediction">
        <sequence resource="EMBL-CDS" id="BAB10991"/>
    </conflict>
</comment>
<organism>
    <name type="scientific">Arabidopsis thaliana</name>
    <name type="common">Mouse-ear cress</name>
    <dbReference type="NCBI Taxonomy" id="3702"/>
    <lineage>
        <taxon>Eukaryota</taxon>
        <taxon>Viridiplantae</taxon>
        <taxon>Streptophyta</taxon>
        <taxon>Embryophyta</taxon>
        <taxon>Tracheophyta</taxon>
        <taxon>Spermatophyta</taxon>
        <taxon>Magnoliopsida</taxon>
        <taxon>eudicotyledons</taxon>
        <taxon>Gunneridae</taxon>
        <taxon>Pentapetalae</taxon>
        <taxon>rosids</taxon>
        <taxon>malvids</taxon>
        <taxon>Brassicales</taxon>
        <taxon>Brassicaceae</taxon>
        <taxon>Camelineae</taxon>
        <taxon>Arabidopsis</taxon>
    </lineage>
</organism>
<dbReference type="EC" id="7.6.2.1" evidence="7"/>
<dbReference type="EMBL" id="AB005239">
    <property type="protein sequence ID" value="BAB10991.1"/>
    <property type="status" value="ALT_SEQ"/>
    <property type="molecule type" value="Genomic_DNA"/>
</dbReference>
<dbReference type="EMBL" id="CP002688">
    <property type="protein sequence ID" value="AED95079.1"/>
    <property type="molecule type" value="Genomic_DNA"/>
</dbReference>
<dbReference type="EMBL" id="AF419611">
    <property type="protein sequence ID" value="AAL31943.1"/>
    <property type="status" value="ALT_INIT"/>
    <property type="molecule type" value="mRNA"/>
</dbReference>
<dbReference type="EMBL" id="BT006356">
    <property type="protein sequence ID" value="AAP21164.1"/>
    <property type="molecule type" value="mRNA"/>
</dbReference>
<dbReference type="RefSeq" id="NP_001190471.1">
    <molecule id="P98205-1"/>
    <property type="nucleotide sequence ID" value="NM_001203542.2"/>
</dbReference>
<dbReference type="SMR" id="P98205"/>
<dbReference type="BioGRID" id="19697">
    <property type="interactions" value="1"/>
</dbReference>
<dbReference type="FunCoup" id="P98205">
    <property type="interactions" value="717"/>
</dbReference>
<dbReference type="STRING" id="3702.P98205"/>
<dbReference type="TCDB" id="3.A.3.8.9">
    <property type="family name" value="the p-type atpase (p-atpase) superfamily"/>
</dbReference>
<dbReference type="GlyGen" id="P98205">
    <property type="glycosylation" value="1 site"/>
</dbReference>
<dbReference type="iPTMnet" id="P98205"/>
<dbReference type="PaxDb" id="3702-AT5G44240.1"/>
<dbReference type="ProteomicsDB" id="244812">
    <molecule id="P98205-1"/>
</dbReference>
<dbReference type="EnsemblPlants" id="AT5G44240.2">
    <molecule id="P98205-1"/>
    <property type="protein sequence ID" value="AT5G44240.2"/>
    <property type="gene ID" value="AT5G44240"/>
</dbReference>
<dbReference type="GeneID" id="834447"/>
<dbReference type="Gramene" id="AT5G44240.2">
    <molecule id="P98205-1"/>
    <property type="protein sequence ID" value="AT5G44240.2"/>
    <property type="gene ID" value="AT5G44240"/>
</dbReference>
<dbReference type="KEGG" id="ath:AT5G44240"/>
<dbReference type="Araport" id="AT5G44240"/>
<dbReference type="TAIR" id="AT5G44240">
    <property type="gene designation" value="ALA2"/>
</dbReference>
<dbReference type="eggNOG" id="KOG0206">
    <property type="taxonomic scope" value="Eukaryota"/>
</dbReference>
<dbReference type="HOGENOM" id="CLU_000846_3_1_1"/>
<dbReference type="InParanoid" id="P98205"/>
<dbReference type="OMA" id="IAITTWH"/>
<dbReference type="PhylomeDB" id="P98205"/>
<dbReference type="BioCyc" id="ARA:AT5G44240-MONOMER"/>
<dbReference type="PRO" id="PR:P98205"/>
<dbReference type="Proteomes" id="UP000006548">
    <property type="component" value="Chromosome 5"/>
</dbReference>
<dbReference type="ExpressionAtlas" id="P98205">
    <property type="expression patterns" value="baseline and differential"/>
</dbReference>
<dbReference type="GO" id="GO:0005789">
    <property type="term" value="C:endoplasmic reticulum membrane"/>
    <property type="evidence" value="ECO:0007669"/>
    <property type="project" value="UniProtKB-SubCell"/>
</dbReference>
<dbReference type="GO" id="GO:0005524">
    <property type="term" value="F:ATP binding"/>
    <property type="evidence" value="ECO:0007669"/>
    <property type="project" value="UniProtKB-KW"/>
</dbReference>
<dbReference type="GO" id="GO:0016887">
    <property type="term" value="F:ATP hydrolysis activity"/>
    <property type="evidence" value="ECO:0007669"/>
    <property type="project" value="InterPro"/>
</dbReference>
<dbReference type="GO" id="GO:0140326">
    <property type="term" value="F:ATPase-coupled intramembrane lipid transporter activity"/>
    <property type="evidence" value="ECO:0007669"/>
    <property type="project" value="UniProtKB-EC"/>
</dbReference>
<dbReference type="GO" id="GO:0000287">
    <property type="term" value="F:magnesium ion binding"/>
    <property type="evidence" value="ECO:0007669"/>
    <property type="project" value="InterPro"/>
</dbReference>
<dbReference type="GO" id="GO:0015914">
    <property type="term" value="P:phospholipid transport"/>
    <property type="evidence" value="ECO:0007669"/>
    <property type="project" value="InterPro"/>
</dbReference>
<dbReference type="CDD" id="cd07536">
    <property type="entry name" value="P-type_ATPase_APLT"/>
    <property type="match status" value="1"/>
</dbReference>
<dbReference type="FunFam" id="2.70.150.10:FF:000032">
    <property type="entry name" value="Phospholipid-transporting ATPase"/>
    <property type="match status" value="1"/>
</dbReference>
<dbReference type="FunFam" id="3.40.1110.10:FF:000033">
    <property type="entry name" value="Phospholipid-transporting ATPase"/>
    <property type="match status" value="1"/>
</dbReference>
<dbReference type="FunFam" id="3.40.50.1000:FF:000084">
    <property type="entry name" value="Phospholipid-transporting ATPase"/>
    <property type="match status" value="1"/>
</dbReference>
<dbReference type="Gene3D" id="3.40.1110.10">
    <property type="entry name" value="Calcium-transporting ATPase, cytoplasmic domain N"/>
    <property type="match status" value="1"/>
</dbReference>
<dbReference type="Gene3D" id="2.70.150.10">
    <property type="entry name" value="Calcium-transporting ATPase, cytoplasmic transduction domain A"/>
    <property type="match status" value="1"/>
</dbReference>
<dbReference type="Gene3D" id="3.40.50.1000">
    <property type="entry name" value="HAD superfamily/HAD-like"/>
    <property type="match status" value="1"/>
</dbReference>
<dbReference type="InterPro" id="IPR023299">
    <property type="entry name" value="ATPase_P-typ_cyto_dom_N"/>
</dbReference>
<dbReference type="InterPro" id="IPR018303">
    <property type="entry name" value="ATPase_P-typ_P_site"/>
</dbReference>
<dbReference type="InterPro" id="IPR023298">
    <property type="entry name" value="ATPase_P-typ_TM_dom_sf"/>
</dbReference>
<dbReference type="InterPro" id="IPR008250">
    <property type="entry name" value="ATPase_P-typ_transduc_dom_A_sf"/>
</dbReference>
<dbReference type="InterPro" id="IPR036412">
    <property type="entry name" value="HAD-like_sf"/>
</dbReference>
<dbReference type="InterPro" id="IPR023214">
    <property type="entry name" value="HAD_sf"/>
</dbReference>
<dbReference type="InterPro" id="IPR006539">
    <property type="entry name" value="P-type_ATPase_IV"/>
</dbReference>
<dbReference type="InterPro" id="IPR032631">
    <property type="entry name" value="P-type_ATPase_N"/>
</dbReference>
<dbReference type="InterPro" id="IPR001757">
    <property type="entry name" value="P_typ_ATPase"/>
</dbReference>
<dbReference type="InterPro" id="IPR032630">
    <property type="entry name" value="P_typ_ATPase_c"/>
</dbReference>
<dbReference type="InterPro" id="IPR044492">
    <property type="entry name" value="P_typ_ATPase_HD_dom"/>
</dbReference>
<dbReference type="NCBIfam" id="TIGR01652">
    <property type="entry name" value="ATPase-Plipid"/>
    <property type="match status" value="1"/>
</dbReference>
<dbReference type="NCBIfam" id="TIGR01494">
    <property type="entry name" value="ATPase_P-type"/>
    <property type="match status" value="1"/>
</dbReference>
<dbReference type="PANTHER" id="PTHR24092:SF19">
    <property type="entry name" value="PHOSPHOLIPID-TRANSPORTING ATPASE"/>
    <property type="match status" value="1"/>
</dbReference>
<dbReference type="PANTHER" id="PTHR24092">
    <property type="entry name" value="PROBABLE PHOSPHOLIPID-TRANSPORTING ATPASE"/>
    <property type="match status" value="1"/>
</dbReference>
<dbReference type="Pfam" id="PF13246">
    <property type="entry name" value="Cation_ATPase"/>
    <property type="match status" value="1"/>
</dbReference>
<dbReference type="Pfam" id="PF00122">
    <property type="entry name" value="E1-E2_ATPase"/>
    <property type="match status" value="1"/>
</dbReference>
<dbReference type="Pfam" id="PF16212">
    <property type="entry name" value="PhoLip_ATPase_C"/>
    <property type="match status" value="1"/>
</dbReference>
<dbReference type="Pfam" id="PF16209">
    <property type="entry name" value="PhoLip_ATPase_N"/>
    <property type="match status" value="1"/>
</dbReference>
<dbReference type="PRINTS" id="PR00119">
    <property type="entry name" value="CATATPASE"/>
</dbReference>
<dbReference type="SFLD" id="SFLDG00002">
    <property type="entry name" value="C1.7:_P-type_atpase_like"/>
    <property type="match status" value="1"/>
</dbReference>
<dbReference type="SFLD" id="SFLDF00027">
    <property type="entry name" value="p-type_atpase"/>
    <property type="match status" value="1"/>
</dbReference>
<dbReference type="SUPFAM" id="SSF81653">
    <property type="entry name" value="Calcium ATPase, transduction domain A"/>
    <property type="match status" value="1"/>
</dbReference>
<dbReference type="SUPFAM" id="SSF81665">
    <property type="entry name" value="Calcium ATPase, transmembrane domain M"/>
    <property type="match status" value="1"/>
</dbReference>
<dbReference type="SUPFAM" id="SSF56784">
    <property type="entry name" value="HAD-like"/>
    <property type="match status" value="1"/>
</dbReference>
<dbReference type="SUPFAM" id="SSF81660">
    <property type="entry name" value="Metal cation-transporting ATPase, ATP-binding domain N"/>
    <property type="match status" value="1"/>
</dbReference>
<dbReference type="PROSITE" id="PS00154">
    <property type="entry name" value="ATPASE_E1_E2"/>
    <property type="match status" value="1"/>
</dbReference>
<proteinExistence type="evidence at protein level"/>
<keyword id="KW-0025">Alternative splicing</keyword>
<keyword id="KW-0067">ATP-binding</keyword>
<keyword id="KW-0256">Endoplasmic reticulum</keyword>
<keyword id="KW-0460">Magnesium</keyword>
<keyword id="KW-0472">Membrane</keyword>
<keyword id="KW-0479">Metal-binding</keyword>
<keyword id="KW-0547">Nucleotide-binding</keyword>
<keyword id="KW-0597">Phosphoprotein</keyword>
<keyword id="KW-1185">Reference proteome</keyword>
<keyword id="KW-1278">Translocase</keyword>
<keyword id="KW-0812">Transmembrane</keyword>
<keyword id="KW-1133">Transmembrane helix</keyword>
<name>ALA2_ARATH</name>
<evidence type="ECO:0000250" key="1"/>
<evidence type="ECO:0000255" key="2"/>
<evidence type="ECO:0000256" key="3">
    <source>
        <dbReference type="SAM" id="MobiDB-lite"/>
    </source>
</evidence>
<evidence type="ECO:0000269" key="4">
    <source>
    </source>
</evidence>
<evidence type="ECO:0000303" key="5">
    <source>
    </source>
</evidence>
<evidence type="ECO:0000305" key="6"/>
<evidence type="ECO:0000305" key="7">
    <source>
    </source>
</evidence>
<evidence type="ECO:0000312" key="8">
    <source>
        <dbReference type="Araport" id="AT5G44240"/>
    </source>
</evidence>
<evidence type="ECO:0000312" key="9">
    <source>
        <dbReference type="EMBL" id="BAB10991.1"/>
    </source>
</evidence>
<evidence type="ECO:0007744" key="10">
    <source>
    </source>
</evidence>
<feature type="chain" id="PRO_0000046386" description="Phospholipid-transporting ATPase 2">
    <location>
        <begin position="1"/>
        <end position="1107"/>
    </location>
</feature>
<feature type="topological domain" description="Cytoplasmic" evidence="2">
    <location>
        <begin position="1"/>
        <end position="33"/>
    </location>
</feature>
<feature type="transmembrane region" description="Helical" evidence="2">
    <location>
        <begin position="34"/>
        <end position="55"/>
    </location>
</feature>
<feature type="topological domain" description="Extracellular" evidence="2">
    <location>
        <begin position="56"/>
        <end position="60"/>
    </location>
</feature>
<feature type="transmembrane region" description="Helical" evidence="2">
    <location>
        <begin position="61"/>
        <end position="83"/>
    </location>
</feature>
<feature type="topological domain" description="Cytoplasmic" evidence="2">
    <location>
        <begin position="84"/>
        <end position="268"/>
    </location>
</feature>
<feature type="transmembrane region" description="Helical" evidence="2">
    <location>
        <begin position="269"/>
        <end position="290"/>
    </location>
</feature>
<feature type="topological domain" description="Extracellular" evidence="2">
    <location>
        <begin position="291"/>
        <end position="315"/>
    </location>
</feature>
<feature type="transmembrane region" description="Helical" evidence="2">
    <location>
        <begin position="316"/>
        <end position="333"/>
    </location>
</feature>
<feature type="topological domain" description="Cytoplasmic" evidence="2">
    <location>
        <begin position="334"/>
        <end position="807"/>
    </location>
</feature>
<feature type="transmembrane region" description="Helical" evidence="2">
    <location>
        <begin position="808"/>
        <end position="827"/>
    </location>
</feature>
<feature type="topological domain" description="Extracellular" evidence="2">
    <location>
        <begin position="828"/>
        <end position="841"/>
    </location>
</feature>
<feature type="transmembrane region" description="Helical" evidence="2">
    <location>
        <begin position="842"/>
        <end position="860"/>
    </location>
</feature>
<feature type="topological domain" description="Cytoplasmic" evidence="2">
    <location>
        <begin position="861"/>
        <end position="890"/>
    </location>
</feature>
<feature type="transmembrane region" description="Helical" evidence="2">
    <location>
        <begin position="891"/>
        <end position="912"/>
    </location>
</feature>
<feature type="topological domain" description="Extracellular" evidence="2">
    <location>
        <begin position="913"/>
        <end position="919"/>
    </location>
</feature>
<feature type="transmembrane region" description="Helical" evidence="2">
    <location>
        <begin position="920"/>
        <end position="942"/>
    </location>
</feature>
<feature type="topological domain" description="Cytoplasmic" evidence="2">
    <location>
        <begin position="943"/>
        <end position="948"/>
    </location>
</feature>
<feature type="transmembrane region" description="Helical" evidence="2">
    <location>
        <begin position="949"/>
        <end position="969"/>
    </location>
</feature>
<feature type="topological domain" description="Extracellular" evidence="2">
    <location>
        <begin position="970"/>
        <end position="982"/>
    </location>
</feature>
<feature type="transmembrane region" description="Helical" evidence="2">
    <location>
        <begin position="983"/>
        <end position="1007"/>
    </location>
</feature>
<feature type="topological domain" description="Cytoplasmic" evidence="2">
    <location>
        <begin position="1008"/>
        <end position="1107"/>
    </location>
</feature>
<feature type="region of interest" description="Disordered" evidence="3">
    <location>
        <begin position="1048"/>
        <end position="1075"/>
    </location>
</feature>
<feature type="active site" description="4-aspartylphosphate intermediate" evidence="1">
    <location>
        <position position="381"/>
    </location>
</feature>
<feature type="binding site" evidence="1">
    <location>
        <position position="752"/>
    </location>
    <ligand>
        <name>Mg(2+)</name>
        <dbReference type="ChEBI" id="CHEBI:18420"/>
    </ligand>
</feature>
<feature type="binding site" evidence="1">
    <location>
        <position position="756"/>
    </location>
    <ligand>
        <name>Mg(2+)</name>
        <dbReference type="ChEBI" id="CHEBI:18420"/>
    </ligand>
</feature>
<feature type="modified residue" description="Phosphoserine" evidence="10">
    <location>
        <position position="1050"/>
    </location>
</feature>
<feature type="mutagenesis site" description="Loss of activity." evidence="4">
    <original>D</original>
    <variation>A</variation>
    <location>
        <position position="381"/>
    </location>
</feature>
<gene>
    <name evidence="5" type="primary">ALA2</name>
    <name evidence="8" type="ordered locus">At5g44240</name>
    <name evidence="9" type="ORF">MLN1.17</name>
</gene>
<accession>P98205</accession>
<accession>Q84ME2</accession>
<accession>Q8W567</accession>
<reference key="1">
    <citation type="journal article" date="1997" name="DNA Res.">
        <title>Structural analysis of Arabidopsis thaliana chromosome 5. I. Sequence features of the 1.6 Mb regions covered by twenty physically assigned P1 clones.</title>
        <authorList>
            <person name="Sato S."/>
            <person name="Kotani H."/>
            <person name="Nakamura Y."/>
            <person name="Kaneko T."/>
            <person name="Asamizu E."/>
            <person name="Fukami M."/>
            <person name="Miyajima N."/>
            <person name="Tabata S."/>
        </authorList>
    </citation>
    <scope>NUCLEOTIDE SEQUENCE [LARGE SCALE GENOMIC DNA]</scope>
    <source>
        <strain>cv. Columbia</strain>
    </source>
</reference>
<reference key="2">
    <citation type="journal article" date="2017" name="Plant J.">
        <title>Araport11: a complete reannotation of the Arabidopsis thaliana reference genome.</title>
        <authorList>
            <person name="Cheng C.Y."/>
            <person name="Krishnakumar V."/>
            <person name="Chan A.P."/>
            <person name="Thibaud-Nissen F."/>
            <person name="Schobel S."/>
            <person name="Town C.D."/>
        </authorList>
    </citation>
    <scope>GENOME REANNOTATION</scope>
    <source>
        <strain>cv. Columbia</strain>
    </source>
</reference>
<reference key="3">
    <citation type="journal article" date="2003" name="Science">
        <title>Empirical analysis of transcriptional activity in the Arabidopsis genome.</title>
        <authorList>
            <person name="Yamada K."/>
            <person name="Lim J."/>
            <person name="Dale J.M."/>
            <person name="Chen H."/>
            <person name="Shinn P."/>
            <person name="Palm C.J."/>
            <person name="Southwick A.M."/>
            <person name="Wu H.C."/>
            <person name="Kim C.J."/>
            <person name="Nguyen M."/>
            <person name="Pham P.K."/>
            <person name="Cheuk R.F."/>
            <person name="Karlin-Newmann G."/>
            <person name="Liu S.X."/>
            <person name="Lam B."/>
            <person name="Sakano H."/>
            <person name="Wu T."/>
            <person name="Yu G."/>
            <person name="Miranda M."/>
            <person name="Quach H.L."/>
            <person name="Tripp M."/>
            <person name="Chang C.H."/>
            <person name="Lee J.M."/>
            <person name="Toriumi M.J."/>
            <person name="Chan M.M."/>
            <person name="Tang C.C."/>
            <person name="Onodera C.S."/>
            <person name="Deng J.M."/>
            <person name="Akiyama K."/>
            <person name="Ansari Y."/>
            <person name="Arakawa T."/>
            <person name="Banh J."/>
            <person name="Banno F."/>
            <person name="Bowser L."/>
            <person name="Brooks S.Y."/>
            <person name="Carninci P."/>
            <person name="Chao Q."/>
            <person name="Choy N."/>
            <person name="Enju A."/>
            <person name="Goldsmith A.D."/>
            <person name="Gurjal M."/>
            <person name="Hansen N.F."/>
            <person name="Hayashizaki Y."/>
            <person name="Johnson-Hopson C."/>
            <person name="Hsuan V.W."/>
            <person name="Iida K."/>
            <person name="Karnes M."/>
            <person name="Khan S."/>
            <person name="Koesema E."/>
            <person name="Ishida J."/>
            <person name="Jiang P.X."/>
            <person name="Jones T."/>
            <person name="Kawai J."/>
            <person name="Kamiya A."/>
            <person name="Meyers C."/>
            <person name="Nakajima M."/>
            <person name="Narusaka M."/>
            <person name="Seki M."/>
            <person name="Sakurai T."/>
            <person name="Satou M."/>
            <person name="Tamse R."/>
            <person name="Vaysberg M."/>
            <person name="Wallender E.K."/>
            <person name="Wong C."/>
            <person name="Yamamura Y."/>
            <person name="Yuan S."/>
            <person name="Shinozaki K."/>
            <person name="Davis R.W."/>
            <person name="Theologis A."/>
            <person name="Ecker J.R."/>
        </authorList>
    </citation>
    <scope>NUCLEOTIDE SEQUENCE [LARGE SCALE MRNA] OF 591-1107</scope>
    <source>
        <strain>cv. Columbia</strain>
    </source>
</reference>
<reference key="4">
    <citation type="journal article" date="2001" name="Plant Physiol.">
        <title>Inventory of the superfamily of P-type ion pumps in Arabidopsis.</title>
        <authorList>
            <person name="Axelsen K.B."/>
            <person name="Palmgren M.G."/>
        </authorList>
    </citation>
    <scope>GENE FAMILY</scope>
    <scope>NOMENCLATURE</scope>
</reference>
<reference key="5">
    <citation type="journal article" date="2009" name="J. Proteomics">
        <title>Phosphoproteomic analysis of nuclei-enriched fractions from Arabidopsis thaliana.</title>
        <authorList>
            <person name="Jones A.M.E."/>
            <person name="MacLean D."/>
            <person name="Studholme D.J."/>
            <person name="Serna-Sanz A."/>
            <person name="Andreasson E."/>
            <person name="Rathjen J.P."/>
            <person name="Peck S.C."/>
        </authorList>
    </citation>
    <scope>PHOSPHORYLATION [LARGE SCALE ANALYSIS] AT SER-1050</scope>
    <scope>IDENTIFICATION BY MASS SPECTROMETRY [LARGE SCALE ANALYSIS]</scope>
    <source>
        <strain>cv. Columbia</strain>
    </source>
</reference>
<reference key="6">
    <citation type="journal article" date="2009" name="Plant Physiol.">
        <title>Large-scale Arabidopsis phosphoproteome profiling reveals novel chloroplast kinase substrates and phosphorylation networks.</title>
        <authorList>
            <person name="Reiland S."/>
            <person name="Messerli G."/>
            <person name="Baerenfaller K."/>
            <person name="Gerrits B."/>
            <person name="Endler A."/>
            <person name="Grossmann J."/>
            <person name="Gruissem W."/>
            <person name="Baginsky S."/>
        </authorList>
    </citation>
    <scope>IDENTIFICATION BY MASS SPECTROMETRY [LARGE SCALE ANALYSIS]</scope>
</reference>
<reference key="7">
    <citation type="journal article" date="2010" name="Mol. Biol. Cell">
        <title>Intracellular targeting signals and lipid specificity determinants of the ALA/ALIS P4-ATPase complex reside in the catalytic ALA alpha-subunit.</title>
        <authorList>
            <person name="Lopez-Marques R.L."/>
            <person name="Poulsen L.R."/>
            <person name="Hanisch S."/>
            <person name="Meffert K."/>
            <person name="Buch-Pedersen M.J."/>
            <person name="Jakobsen M.K."/>
            <person name="Pomorski T.G."/>
            <person name="Palmgren M.G."/>
        </authorList>
    </citation>
    <scope>FUNCTION</scope>
    <scope>MUTAGENESIS OF ASP-381</scope>
    <scope>SUBCELLULAR LOCATION</scope>
    <scope>INTERACTION WITH ALIS1; ALIS3 AND ALIS5</scope>
</reference>
<protein>
    <recommendedName>
        <fullName evidence="5">Phospholipid-transporting ATPase 2</fullName>
        <shortName evidence="5">AtALA2</shortName>
        <ecNumber evidence="7">7.6.2.1</ecNumber>
    </recommendedName>
    <alternativeName>
        <fullName evidence="5">Aminophospholipid ATPase 2</fullName>
    </alternativeName>
    <alternativeName>
        <fullName evidence="5">Aminophospholipid flippase 2</fullName>
    </alternativeName>
</protein>
<sequence>MKRFVYINDDEASKELCCDNRISNRKYTLWNFLPKNLWEQFSRFMNQYFLLIACLQLWSLITPVNPASTWGPLIFIFAVSASKEAWDDYHRYLSDKKANEKEVWIVKQGIKKHIQAQDIQVGNIVWLRENDEVPCDLVLLGTSDPQGVCYVETAALDGETDLKTRVIPSACVGIDLELLHKMKGVIECPVPDKDIRRFDANMRLFPPFIDNDVCSLTIKNTLLQSCYLRNTEWACGVSVYTGNQTKLGMSRGIAEPKLTAMDAMIDKLTGAIFVFQIVVVLVLGIAGNVWKDTEARKQWYVQYPEEAPWYELLVIPLRFELLCSIMIPISIKVSLDLVKGLYAKFIEWDVEMIDQETGTASYAANTAISEDLGQVEYILTDKTGTLTDNKMIFRRCCIGGIFYGNENGDALKDAQLLNAITSGSTDVIRFLTVMAICNTVLPVQSKAGDIVYKAQSQDEDALVIAASKLHMVFVGKNANLLEIRFNGSVIRYEVLEILEFTSDRKRMSVVVKDCQNGKIILLSKGADEAILPYARAGQQTRTIGDAVEHYSQLGLRTLCLAWRELEENEYLEWSVKFKEASSLLVDREWRIAEVCQRLEHDLYILGVTAIEDRLQDGVPETIETLRKAGINFWMLTGDKQNTAIQIALSCNFISPEPKGQLLMIDGKTEEDVSRSLERVLLTMRITASEPKDVAFVIDGWALEIALKHHRKDFVELAILSRTAICCRVTPSQKAQLVEILKSCDYRTLAIGDGGNDVRMIQQADIGVGISGREGLQAARAADYSIGRFRFLKRLILVHGRYSYNRTAFLSQYSFYKSLLICFIQIFFSFISGVSGTSLFNSVSLMAYNVFYTSVPVLVSVIDKDLSEASVMQHPQILFYCQAGRLLNPSTFAGWFGRSLFHAIIVFVITIHAYAYEKSEMEELGMVALSGCIWLQAFVVAQETNSFTVLQHLSIWGNLVGFYAINFLFSAIPSSGMYTIMFRLCSQPSYWITMFLIVGAGMGPIFALKYFRYTYRPSKINILQQAERMGGPILTLGNIETQPRTIEKDLSPISITQPKNRSPVYEPLLSDSPNATRRSFGPGTPFEFFQSQSRLSSSSGYTRNCKDN</sequence>